<dbReference type="EMBL" id="AE005174">
    <property type="protein sequence ID" value="AAG58674.2"/>
    <property type="status" value="ALT_INIT"/>
    <property type="molecule type" value="Genomic_DNA"/>
</dbReference>
<dbReference type="EMBL" id="BA000007">
    <property type="protein sequence ID" value="BAB37835.2"/>
    <property type="status" value="ALT_INIT"/>
    <property type="molecule type" value="Genomic_DNA"/>
</dbReference>
<dbReference type="PIR" id="D91180">
    <property type="entry name" value="D91180"/>
</dbReference>
<dbReference type="PIR" id="F86026">
    <property type="entry name" value="F86026"/>
</dbReference>
<dbReference type="RefSeq" id="NP_312439.1">
    <property type="nucleotide sequence ID" value="NC_002695.1"/>
</dbReference>
<dbReference type="RefSeq" id="WP_001302734.1">
    <property type="nucleotide sequence ID" value="NZ_SDVX01000004.1"/>
</dbReference>
<dbReference type="SMR" id="Q8X5L8"/>
<dbReference type="STRING" id="155864.Z4947"/>
<dbReference type="GeneID" id="915722"/>
<dbReference type="KEGG" id="ece:Z4947"/>
<dbReference type="KEGG" id="ecs:ECs_4412"/>
<dbReference type="PATRIC" id="fig|386585.9.peg.4613"/>
<dbReference type="eggNOG" id="COG1215">
    <property type="taxonomic scope" value="Bacteria"/>
</dbReference>
<dbReference type="HOGENOM" id="CLU_003556_1_1_6"/>
<dbReference type="UniPathway" id="UPA00694"/>
<dbReference type="Proteomes" id="UP000000558">
    <property type="component" value="Chromosome"/>
</dbReference>
<dbReference type="Proteomes" id="UP000002519">
    <property type="component" value="Chromosome"/>
</dbReference>
<dbReference type="GO" id="GO:0005886">
    <property type="term" value="C:plasma membrane"/>
    <property type="evidence" value="ECO:0007669"/>
    <property type="project" value="UniProtKB-SubCell"/>
</dbReference>
<dbReference type="GO" id="GO:0030244">
    <property type="term" value="P:cellulose biosynthetic process"/>
    <property type="evidence" value="ECO:0007669"/>
    <property type="project" value="UniProtKB-KW"/>
</dbReference>
<dbReference type="GO" id="GO:0006011">
    <property type="term" value="P:UDP-alpha-D-glucose metabolic process"/>
    <property type="evidence" value="ECO:0007669"/>
    <property type="project" value="InterPro"/>
</dbReference>
<dbReference type="FunFam" id="2.60.120.260:FF:000083">
    <property type="entry name" value="Cyclic di-GMP-binding protein"/>
    <property type="match status" value="1"/>
</dbReference>
<dbReference type="FunFam" id="2.60.120.260:FF:000094">
    <property type="entry name" value="Cyclic di-GMP-binding protein"/>
    <property type="match status" value="1"/>
</dbReference>
<dbReference type="Gene3D" id="2.60.120.260">
    <property type="entry name" value="Galactose-binding domain-like"/>
    <property type="match status" value="2"/>
</dbReference>
<dbReference type="InterPro" id="IPR003920">
    <property type="entry name" value="Cell_synth_B"/>
</dbReference>
<dbReference type="InterPro" id="IPR018513">
    <property type="entry name" value="Cell_synthase_bac"/>
</dbReference>
<dbReference type="NCBIfam" id="NF008323">
    <property type="entry name" value="PRK11114.1-1"/>
    <property type="match status" value="1"/>
</dbReference>
<dbReference type="NCBIfam" id="NF008325">
    <property type="entry name" value="PRK11114.1-3"/>
    <property type="match status" value="1"/>
</dbReference>
<dbReference type="PANTHER" id="PTHR39083">
    <property type="entry name" value="CYCLIC DI-GMP-BINDING PROTEIN"/>
    <property type="match status" value="1"/>
</dbReference>
<dbReference type="PANTHER" id="PTHR39083:SF1">
    <property type="entry name" value="CYCLIC DI-GMP-BINDING PROTEIN"/>
    <property type="match status" value="1"/>
</dbReference>
<dbReference type="Pfam" id="PF03170">
    <property type="entry name" value="BcsB"/>
    <property type="match status" value="1"/>
</dbReference>
<dbReference type="PRINTS" id="PR01440">
    <property type="entry name" value="CELLSNTHASEB"/>
</dbReference>
<gene>
    <name type="primary">bcsB</name>
    <name type="ordered locus">Z4947</name>
    <name type="ordered locus">ECs4412</name>
</gene>
<reference key="1">
    <citation type="journal article" date="2001" name="Nature">
        <title>Genome sequence of enterohaemorrhagic Escherichia coli O157:H7.</title>
        <authorList>
            <person name="Perna N.T."/>
            <person name="Plunkett G. III"/>
            <person name="Burland V."/>
            <person name="Mau B."/>
            <person name="Glasner J.D."/>
            <person name="Rose D.J."/>
            <person name="Mayhew G.F."/>
            <person name="Evans P.S."/>
            <person name="Gregor J."/>
            <person name="Kirkpatrick H.A."/>
            <person name="Posfai G."/>
            <person name="Hackett J."/>
            <person name="Klink S."/>
            <person name="Boutin A."/>
            <person name="Shao Y."/>
            <person name="Miller L."/>
            <person name="Grotbeck E.J."/>
            <person name="Davis N.W."/>
            <person name="Lim A."/>
            <person name="Dimalanta E.T."/>
            <person name="Potamousis K."/>
            <person name="Apodaca J."/>
            <person name="Anantharaman T.S."/>
            <person name="Lin J."/>
            <person name="Yen G."/>
            <person name="Schwartz D.C."/>
            <person name="Welch R.A."/>
            <person name="Blattner F.R."/>
        </authorList>
    </citation>
    <scope>NUCLEOTIDE SEQUENCE [LARGE SCALE GENOMIC DNA]</scope>
    <source>
        <strain>O157:H7 / EDL933 / ATCC 700927 / EHEC</strain>
    </source>
</reference>
<reference key="2">
    <citation type="journal article" date="2001" name="DNA Res.">
        <title>Complete genome sequence of enterohemorrhagic Escherichia coli O157:H7 and genomic comparison with a laboratory strain K-12.</title>
        <authorList>
            <person name="Hayashi T."/>
            <person name="Makino K."/>
            <person name="Ohnishi M."/>
            <person name="Kurokawa K."/>
            <person name="Ishii K."/>
            <person name="Yokoyama K."/>
            <person name="Han C.-G."/>
            <person name="Ohtsubo E."/>
            <person name="Nakayama K."/>
            <person name="Murata T."/>
            <person name="Tanaka M."/>
            <person name="Tobe T."/>
            <person name="Iida T."/>
            <person name="Takami H."/>
            <person name="Honda T."/>
            <person name="Sasakawa C."/>
            <person name="Ogasawara N."/>
            <person name="Yasunaga T."/>
            <person name="Kuhara S."/>
            <person name="Shiba T."/>
            <person name="Hattori M."/>
            <person name="Shinagawa H."/>
        </authorList>
    </citation>
    <scope>NUCLEOTIDE SEQUENCE [LARGE SCALE GENOMIC DNA]</scope>
    <source>
        <strain>O157:H7 / Sakai / RIMD 0509952 / EHEC</strain>
    </source>
</reference>
<protein>
    <recommendedName>
        <fullName>Cyclic di-GMP-binding protein</fullName>
    </recommendedName>
    <alternativeName>
        <fullName>Cellulose synthase regulatory subunit</fullName>
    </alternativeName>
</protein>
<name>BCSB_ECO57</name>
<comment type="function">
    <text evidence="1">Binds the cellulose synthase activator, bis-(3'-5') cyclic diguanylic acid (c-di-GMP).</text>
</comment>
<comment type="pathway">
    <text>Glycan metabolism; bacterial cellulose biosynthesis.</text>
</comment>
<comment type="subunit">
    <text evidence="1">Tightly associated with the cellulose synthase catalytic subunit.</text>
</comment>
<comment type="subcellular location">
    <subcellularLocation>
        <location evidence="1">Cell inner membrane</location>
        <topology evidence="1">Single-pass type I membrane protein</topology>
    </subcellularLocation>
</comment>
<comment type="similarity">
    <text evidence="3">Belongs to the AcsB/BcsB family.</text>
</comment>
<comment type="sequence caution" evidence="3">
    <conflict type="erroneous initiation">
        <sequence resource="EMBL-CDS" id="AAG58674"/>
    </conflict>
    <text>Truncated N-terminus.</text>
</comment>
<comment type="sequence caution" evidence="3">
    <conflict type="erroneous initiation">
        <sequence resource="EMBL-CDS" id="BAB37835"/>
    </conflict>
    <text>Truncated N-terminus.</text>
</comment>
<sequence length="785" mass="86675">MKRKLFWICAVAMGMSAFPSFMTQATPATQPLINAEPAVAAQTEQNPQVGQVMPGVQGADAPVVAQNGPSRDVKLTFAQIAPPPGSMVLRGINPNGSIEFGMRSDEVVTKAMLNLEYTPSPSLLPVQSQLKVYLNDELMGVLPVTKEQLGKKTLAQMPINPLFITDFNRVRLEFVGHYQDVCENPASTTLWLDVGRSSGLDLTYQTLNVKNDLSHFPVPFFDPRDNRTNTLPMVFAGAPDVGLQQASAIVASWFGSRSGWRGQNFPVLYNQLPDRNAIVFATNDKRPDFLRDHPAVKAPVIEMINHPQNPYVKLLVVFGRDDKDLLQAAKGIAQGNILFRGESVVVNEVKPLLPRKPYDAPNWVRTDRPVTFGELKTYEEQLQSSGLEPAAINVSLNLPPDLYLMRSTGIDMDINYRYTMPPVKDSSRMDISLNNQFLQSFNLSSKQEANRLLLRIPVLQGLLDGKTDVSIPALKLGATNQLRFDFEYMNPMPGGSVDNCITFQPVQNHVVIGDDSTIDFSKYYHFIPMPDLRAFANAGFPFSRMADLSQTITVMPKTPNEAQMETLLNTVGFIGAQTGFPAINLTVTDDGSTIQGKDADIMIIGGIPDKLKDDKQIDLLVQATESWVKTPMRQTPFPGIVPDESDRAAETQSTLTSSGAMAAVIGFQSPYNDQRSVIALLADSPRGYEMLNDAVNDSGKRATMFGSVAVIRESGINSLRVGDVYYVGHLPWFERLWYALANHPILLAVLAVLAVLAAISVILLAWVLWRLLRIISRRRLNPDNE</sequence>
<evidence type="ECO:0000250" key="1"/>
<evidence type="ECO:0000255" key="2"/>
<evidence type="ECO:0000305" key="3"/>
<organism>
    <name type="scientific">Escherichia coli O157:H7</name>
    <dbReference type="NCBI Taxonomy" id="83334"/>
    <lineage>
        <taxon>Bacteria</taxon>
        <taxon>Pseudomonadati</taxon>
        <taxon>Pseudomonadota</taxon>
        <taxon>Gammaproteobacteria</taxon>
        <taxon>Enterobacterales</taxon>
        <taxon>Enterobacteriaceae</taxon>
        <taxon>Escherichia</taxon>
    </lineage>
</organism>
<proteinExistence type="inferred from homology"/>
<accession>Q8X5L8</accession>
<keyword id="KW-0973">c-di-GMP</keyword>
<keyword id="KW-0997">Cell inner membrane</keyword>
<keyword id="KW-1003">Cell membrane</keyword>
<keyword id="KW-0135">Cellulose biosynthesis</keyword>
<keyword id="KW-0472">Membrane</keyword>
<keyword id="KW-1185">Reference proteome</keyword>
<keyword id="KW-0732">Signal</keyword>
<keyword id="KW-0812">Transmembrane</keyword>
<keyword id="KW-1133">Transmembrane helix</keyword>
<feature type="signal peptide" evidence="2">
    <location>
        <begin position="1"/>
        <end position="25"/>
    </location>
</feature>
<feature type="chain" id="PRO_0000000269" description="Cyclic di-GMP-binding protein">
    <location>
        <begin position="26"/>
        <end position="785"/>
    </location>
</feature>
<feature type="topological domain" description="Periplasmic" evidence="2">
    <location>
        <begin position="26"/>
        <end position="744"/>
    </location>
</feature>
<feature type="transmembrane region" description="Helical" evidence="2">
    <location>
        <begin position="745"/>
        <end position="765"/>
    </location>
</feature>
<feature type="topological domain" description="Cytoplasmic" evidence="2">
    <location>
        <begin position="766"/>
        <end position="785"/>
    </location>
</feature>